<evidence type="ECO:0000250" key="1"/>
<evidence type="ECO:0000255" key="2"/>
<evidence type="ECO:0000255" key="3">
    <source>
        <dbReference type="PROSITE-ProRule" id="PRU00114"/>
    </source>
</evidence>
<evidence type="ECO:0000256" key="4">
    <source>
        <dbReference type="SAM" id="MobiDB-lite"/>
    </source>
</evidence>
<accession>Q5BK49</accession>
<gene>
    <name type="primary">Cd96</name>
</gene>
<sequence length="603" mass="67228">MGRKWTYCVVYAIIQIQFFRGAWEELFNAGDNNVYALPGSDVNLTCQTMEKDLMVQMQWSKVTDEIDMIVVYHPQYGFHYMQGVACESRVAAVETLKDATKWTLNLRNISSSLSGKYECSFTMYPTGTKTIVYNLIVEPYTQDEHNRTIEIETNRTLEIPCFQNTSSEISPRFTFSWLVEKDGVEDVLFTYDYHVSNSTAFKGRVGLGADYGLRLSPVQIQDDGRTFSCFLRISPLKVWKTSTTVKVFAKPEILMTVENTTMDVLGERVFTCLLKNVFPKASITWLIDGRLFQGNEEGIYITNEEKNSSSGFWELKSVLTRMHNRTSQSNNMTVWCMALSPGPGNKMWNTSSQPITFSLDSGTAPTKRLPNVTGSTLGAQTFPDAEVSPTRYLATSSMTIVDENVLTPDPTPQTSNSSMTTKDVNYSQPSSGTDAKNSSRAASSSDGGSRPFPSTSPPKWLSLPHTSTGPQEPDSAVSWIPTDAYTSGSSDASLTSHDVIIRTTKEFPDVLTTANGTTKIKHGHVTGITVNKPRDGMSWPVAVATLLFFCILLFGLGVRKWCQYQKEIMERPPPFKPPPPPIKYMCIQEPTGRGMPCHEMEVL</sequence>
<proteinExistence type="evidence at transcript level"/>
<reference key="1">
    <citation type="journal article" date="2004" name="Genome Res.">
        <title>The status, quality, and expansion of the NIH full-length cDNA project: the Mammalian Gene Collection (MGC).</title>
        <authorList>
            <consortium name="The MGC Project Team"/>
        </authorList>
    </citation>
    <scope>NUCLEOTIDE SEQUENCE [LARGE SCALE MRNA]</scope>
    <source>
        <tissue>Thymus</tissue>
    </source>
</reference>
<name>TACT_RAT</name>
<keyword id="KW-0130">Cell adhesion</keyword>
<keyword id="KW-1015">Disulfide bond</keyword>
<keyword id="KW-0325">Glycoprotein</keyword>
<keyword id="KW-0393">Immunoglobulin domain</keyword>
<keyword id="KW-0472">Membrane</keyword>
<keyword id="KW-1185">Reference proteome</keyword>
<keyword id="KW-0677">Repeat</keyword>
<keyword id="KW-0732">Signal</keyword>
<keyword id="KW-0812">Transmembrane</keyword>
<keyword id="KW-1133">Transmembrane helix</keyword>
<dbReference type="EMBL" id="BC091206">
    <property type="protein sequence ID" value="AAH91206.1"/>
    <property type="molecule type" value="mRNA"/>
</dbReference>
<dbReference type="RefSeq" id="NP_001020203.1">
    <property type="nucleotide sequence ID" value="NM_001025032.1"/>
</dbReference>
<dbReference type="SMR" id="Q5BK49"/>
<dbReference type="FunCoup" id="Q5BK49">
    <property type="interactions" value="108"/>
</dbReference>
<dbReference type="STRING" id="10116.ENSRNOP00000034871"/>
<dbReference type="GlyCosmos" id="Q5BK49">
    <property type="glycosylation" value="16 sites, No reported glycans"/>
</dbReference>
<dbReference type="GlyGen" id="Q5BK49">
    <property type="glycosylation" value="17 sites"/>
</dbReference>
<dbReference type="PhosphoSitePlus" id="Q5BK49"/>
<dbReference type="PaxDb" id="10116-ENSRNOP00000034871"/>
<dbReference type="Ensembl" id="ENSRNOT00000035485.8">
    <property type="protein sequence ID" value="ENSRNOP00000034871.5"/>
    <property type="gene ID" value="ENSRNOG00000023030.8"/>
</dbReference>
<dbReference type="GeneID" id="498079"/>
<dbReference type="KEGG" id="rno:498079"/>
<dbReference type="UCSC" id="RGD:1565249">
    <property type="organism name" value="rat"/>
</dbReference>
<dbReference type="AGR" id="RGD:1565249"/>
<dbReference type="CTD" id="10225"/>
<dbReference type="RGD" id="1565249">
    <property type="gene designation" value="Cd96"/>
</dbReference>
<dbReference type="eggNOG" id="ENOG502QWNP">
    <property type="taxonomic scope" value="Eukaryota"/>
</dbReference>
<dbReference type="GeneTree" id="ENSGT00390000003446"/>
<dbReference type="HOGENOM" id="CLU_033543_1_0_1"/>
<dbReference type="InParanoid" id="Q5BK49"/>
<dbReference type="OMA" id="QHGFYCA"/>
<dbReference type="OrthoDB" id="56921at9989"/>
<dbReference type="PhylomeDB" id="Q5BK49"/>
<dbReference type="Reactome" id="R-RNO-198933">
    <property type="pathway name" value="Immunoregulatory interactions between a Lymphoid and a non-Lymphoid cell"/>
</dbReference>
<dbReference type="PRO" id="PR:Q5BK49"/>
<dbReference type="Proteomes" id="UP000002494">
    <property type="component" value="Chromosome 11"/>
</dbReference>
<dbReference type="Bgee" id="ENSRNOG00000023030">
    <property type="expression patterns" value="Expressed in testis and 11 other cell types or tissues"/>
</dbReference>
<dbReference type="GO" id="GO:0005737">
    <property type="term" value="C:cytoplasm"/>
    <property type="evidence" value="ECO:0000266"/>
    <property type="project" value="RGD"/>
</dbReference>
<dbReference type="GO" id="GO:0016020">
    <property type="term" value="C:membrane"/>
    <property type="evidence" value="ECO:0007669"/>
    <property type="project" value="UniProtKB-SubCell"/>
</dbReference>
<dbReference type="GO" id="GO:0007160">
    <property type="term" value="P:cell-matrix adhesion"/>
    <property type="evidence" value="ECO:0000266"/>
    <property type="project" value="RGD"/>
</dbReference>
<dbReference type="GO" id="GO:0006954">
    <property type="term" value="P:inflammatory response"/>
    <property type="evidence" value="ECO:0000318"/>
    <property type="project" value="GO_Central"/>
</dbReference>
<dbReference type="GO" id="GO:0002728">
    <property type="term" value="P:negative regulation of natural killer cell cytokine production"/>
    <property type="evidence" value="ECO:0000266"/>
    <property type="project" value="RGD"/>
</dbReference>
<dbReference type="GO" id="GO:0032689">
    <property type="term" value="P:negative regulation of type II interferon production"/>
    <property type="evidence" value="ECO:0000266"/>
    <property type="project" value="RGD"/>
</dbReference>
<dbReference type="GO" id="GO:0032496">
    <property type="term" value="P:response to lipopolysaccharide"/>
    <property type="evidence" value="ECO:0000266"/>
    <property type="project" value="RGD"/>
</dbReference>
<dbReference type="Gene3D" id="2.60.40.10">
    <property type="entry name" value="Immunoglobulins"/>
    <property type="match status" value="3"/>
</dbReference>
<dbReference type="InterPro" id="IPR013162">
    <property type="entry name" value="CD80_C2-set"/>
</dbReference>
<dbReference type="InterPro" id="IPR042381">
    <property type="entry name" value="CD96"/>
</dbReference>
<dbReference type="InterPro" id="IPR007110">
    <property type="entry name" value="Ig-like_dom"/>
</dbReference>
<dbReference type="InterPro" id="IPR036179">
    <property type="entry name" value="Ig-like_dom_sf"/>
</dbReference>
<dbReference type="InterPro" id="IPR013783">
    <property type="entry name" value="Ig-like_fold"/>
</dbReference>
<dbReference type="InterPro" id="IPR003599">
    <property type="entry name" value="Ig_sub"/>
</dbReference>
<dbReference type="PANTHER" id="PTHR15317">
    <property type="entry name" value="T-CELL SURFACE PROTEIN TACTILE"/>
    <property type="match status" value="1"/>
</dbReference>
<dbReference type="PANTHER" id="PTHR15317:SF1">
    <property type="entry name" value="T-CELL SURFACE PROTEIN TACTILE"/>
    <property type="match status" value="1"/>
</dbReference>
<dbReference type="Pfam" id="PF08205">
    <property type="entry name" value="C2-set_2"/>
    <property type="match status" value="1"/>
</dbReference>
<dbReference type="SMART" id="SM00409">
    <property type="entry name" value="IG"/>
    <property type="match status" value="2"/>
</dbReference>
<dbReference type="SUPFAM" id="SSF48726">
    <property type="entry name" value="Immunoglobulin"/>
    <property type="match status" value="3"/>
</dbReference>
<dbReference type="PROSITE" id="PS50835">
    <property type="entry name" value="IG_LIKE"/>
    <property type="match status" value="2"/>
</dbReference>
<organism>
    <name type="scientific">Rattus norvegicus</name>
    <name type="common">Rat</name>
    <dbReference type="NCBI Taxonomy" id="10116"/>
    <lineage>
        <taxon>Eukaryota</taxon>
        <taxon>Metazoa</taxon>
        <taxon>Chordata</taxon>
        <taxon>Craniata</taxon>
        <taxon>Vertebrata</taxon>
        <taxon>Euteleostomi</taxon>
        <taxon>Mammalia</taxon>
        <taxon>Eutheria</taxon>
        <taxon>Euarchontoglires</taxon>
        <taxon>Glires</taxon>
        <taxon>Rodentia</taxon>
        <taxon>Myomorpha</taxon>
        <taxon>Muroidea</taxon>
        <taxon>Muridae</taxon>
        <taxon>Murinae</taxon>
        <taxon>Rattus</taxon>
    </lineage>
</organism>
<protein>
    <recommendedName>
        <fullName>T-cell surface protein tactile</fullName>
    </recommendedName>
    <alternativeName>
        <fullName>Cell surface antigen CD96</fullName>
    </alternativeName>
    <alternativeName>
        <fullName>T cell-activated increased late expression protein</fullName>
    </alternativeName>
    <cdAntigenName>CD96</cdAntigenName>
</protein>
<comment type="function">
    <text evidence="1">May be involved in adhesive interactions of activated T and NK cells during the late phase of the immune response. Promotes NK cell-target adhesion by interacting with PVR present on target cells. May function at a time after T and NK cells have penetrated the endothelium using integrins and selectins, when they are actively engaging diseased cells and moving within areas of inflammation (By similarity).</text>
</comment>
<comment type="subunit">
    <text evidence="1">Homodimer; disulfide-linked. Interacts with PVR (By similarity).</text>
</comment>
<comment type="subcellular location">
    <subcellularLocation>
        <location evidence="1">Membrane</location>
        <topology evidence="1">Single-pass type I membrane protein</topology>
    </subcellularLocation>
</comment>
<feature type="signal peptide" evidence="2">
    <location>
        <begin position="1"/>
        <end position="21"/>
    </location>
</feature>
<feature type="chain" id="PRO_0000313892" description="T-cell surface protein tactile">
    <location>
        <begin position="22"/>
        <end position="603"/>
    </location>
</feature>
<feature type="topological domain" description="Extracellular" evidence="2">
    <location>
        <begin position="22"/>
        <end position="537"/>
    </location>
</feature>
<feature type="transmembrane region" description="Helical" evidence="2">
    <location>
        <begin position="538"/>
        <end position="558"/>
    </location>
</feature>
<feature type="topological domain" description="Cytoplasmic" evidence="2">
    <location>
        <begin position="559"/>
        <end position="603"/>
    </location>
</feature>
<feature type="domain" description="Ig-like V-type 1">
    <location>
        <begin position="24"/>
        <end position="132"/>
    </location>
</feature>
<feature type="domain" description="Ig-like V-type 2">
    <location>
        <begin position="139"/>
        <end position="245"/>
    </location>
</feature>
<feature type="domain" description="Ig-like C2-type">
    <location>
        <begin position="251"/>
        <end position="356"/>
    </location>
</feature>
<feature type="region of interest" description="Disordered" evidence="4">
    <location>
        <begin position="359"/>
        <end position="383"/>
    </location>
</feature>
<feature type="region of interest" description="Disordered" evidence="4">
    <location>
        <begin position="403"/>
        <end position="482"/>
    </location>
</feature>
<feature type="compositionally biased region" description="Polar residues" evidence="4">
    <location>
        <begin position="412"/>
        <end position="436"/>
    </location>
</feature>
<feature type="compositionally biased region" description="Low complexity" evidence="4">
    <location>
        <begin position="438"/>
        <end position="450"/>
    </location>
</feature>
<feature type="glycosylation site" description="N-linked (GlcNAc...) asparagine" evidence="2">
    <location>
        <position position="43"/>
    </location>
</feature>
<feature type="glycosylation site" description="N-linked (GlcNAc...) asparagine" evidence="2">
    <location>
        <position position="108"/>
    </location>
</feature>
<feature type="glycosylation site" description="N-linked (GlcNAc...) asparagine" evidence="2">
    <location>
        <position position="146"/>
    </location>
</feature>
<feature type="glycosylation site" description="N-linked (GlcNAc...) asparagine" evidence="2">
    <location>
        <position position="154"/>
    </location>
</feature>
<feature type="glycosylation site" description="N-linked (GlcNAc...) asparagine" evidence="2">
    <location>
        <position position="164"/>
    </location>
</feature>
<feature type="glycosylation site" description="N-linked (GlcNAc...) asparagine" evidence="2">
    <location>
        <position position="197"/>
    </location>
</feature>
<feature type="glycosylation site" description="N-linked (GlcNAc...) asparagine" evidence="2">
    <location>
        <position position="259"/>
    </location>
</feature>
<feature type="glycosylation site" description="N-linked (GlcNAc...) asparagine" evidence="2">
    <location>
        <position position="307"/>
    </location>
</feature>
<feature type="glycosylation site" description="N-linked (GlcNAc...) asparagine" evidence="2">
    <location>
        <position position="324"/>
    </location>
</feature>
<feature type="glycosylation site" description="N-linked (GlcNAc...) asparagine" evidence="2">
    <location>
        <position position="331"/>
    </location>
</feature>
<feature type="glycosylation site" description="N-linked (GlcNAc...) asparagine" evidence="2">
    <location>
        <position position="349"/>
    </location>
</feature>
<feature type="glycosylation site" description="N-linked (GlcNAc...) asparagine" evidence="2">
    <location>
        <position position="371"/>
    </location>
</feature>
<feature type="glycosylation site" description="N-linked (GlcNAc...) asparagine" evidence="2">
    <location>
        <position position="416"/>
    </location>
</feature>
<feature type="glycosylation site" description="N-linked (GlcNAc...) asparagine" evidence="2">
    <location>
        <position position="425"/>
    </location>
</feature>
<feature type="glycosylation site" description="N-linked (GlcNAc...) asparagine" evidence="2">
    <location>
        <position position="437"/>
    </location>
</feature>
<feature type="glycosylation site" description="N-linked (GlcNAc...) asparagine" evidence="2">
    <location>
        <position position="515"/>
    </location>
</feature>
<feature type="disulfide bond" evidence="3">
    <location>
        <begin position="46"/>
        <end position="119"/>
    </location>
</feature>
<feature type="disulfide bond" evidence="3">
    <location>
        <begin position="161"/>
        <end position="229"/>
    </location>
</feature>
<feature type="disulfide bond" evidence="3">
    <location>
        <begin position="272"/>
        <end position="336"/>
    </location>
</feature>